<keyword id="KW-0479">Metal-binding</keyword>
<keyword id="KW-0862">Zinc</keyword>
<name>YACG_ALISL</name>
<accession>B6ELG6</accession>
<reference key="1">
    <citation type="journal article" date="2008" name="BMC Genomics">
        <title>The genome sequence of the fish pathogen Aliivibrio salmonicida strain LFI1238 shows extensive evidence of gene decay.</title>
        <authorList>
            <person name="Hjerde E."/>
            <person name="Lorentzen M.S."/>
            <person name="Holden M.T."/>
            <person name="Seeger K."/>
            <person name="Paulsen S."/>
            <person name="Bason N."/>
            <person name="Churcher C."/>
            <person name="Harris D."/>
            <person name="Norbertczak H."/>
            <person name="Quail M.A."/>
            <person name="Sanders S."/>
            <person name="Thurston S."/>
            <person name="Parkhill J."/>
            <person name="Willassen N.P."/>
            <person name="Thomson N.R."/>
        </authorList>
    </citation>
    <scope>NUCLEOTIDE SEQUENCE [LARGE SCALE GENOMIC DNA]</scope>
    <source>
        <strain>LFI1238</strain>
    </source>
</reference>
<proteinExistence type="inferred from homology"/>
<organism>
    <name type="scientific">Aliivibrio salmonicida (strain LFI1238)</name>
    <name type="common">Vibrio salmonicida (strain LFI1238)</name>
    <dbReference type="NCBI Taxonomy" id="316275"/>
    <lineage>
        <taxon>Bacteria</taxon>
        <taxon>Pseudomonadati</taxon>
        <taxon>Pseudomonadota</taxon>
        <taxon>Gammaproteobacteria</taxon>
        <taxon>Vibrionales</taxon>
        <taxon>Vibrionaceae</taxon>
        <taxon>Aliivibrio</taxon>
    </lineage>
</organism>
<protein>
    <recommendedName>
        <fullName evidence="1">DNA gyrase inhibitor YacG</fullName>
    </recommendedName>
</protein>
<sequence>MSQPNSQQPTIVKCPTCQNKVVWNTESEFRPFCSKKCQMIDFGEWADEEKSIAGAPDMSDSDGWSSEPY</sequence>
<comment type="function">
    <text evidence="1">Inhibits all the catalytic activities of DNA gyrase by preventing its interaction with DNA. Acts by binding directly to the C-terminal domain of GyrB, which probably disrupts DNA binding by the gyrase.</text>
</comment>
<comment type="cofactor">
    <cofactor evidence="1">
        <name>Zn(2+)</name>
        <dbReference type="ChEBI" id="CHEBI:29105"/>
    </cofactor>
    <text evidence="1">Binds 1 zinc ion.</text>
</comment>
<comment type="subunit">
    <text evidence="1">Interacts with GyrB.</text>
</comment>
<comment type="similarity">
    <text evidence="1">Belongs to the DNA gyrase inhibitor YacG family.</text>
</comment>
<gene>
    <name evidence="1" type="primary">yacG</name>
    <name type="ordered locus">VSAL_I2635</name>
</gene>
<feature type="chain" id="PRO_1000130957" description="DNA gyrase inhibitor YacG">
    <location>
        <begin position="1"/>
        <end position="69"/>
    </location>
</feature>
<feature type="binding site" evidence="1">
    <location>
        <position position="14"/>
    </location>
    <ligand>
        <name>Zn(2+)</name>
        <dbReference type="ChEBI" id="CHEBI:29105"/>
    </ligand>
</feature>
<feature type="binding site" evidence="1">
    <location>
        <position position="17"/>
    </location>
    <ligand>
        <name>Zn(2+)</name>
        <dbReference type="ChEBI" id="CHEBI:29105"/>
    </ligand>
</feature>
<feature type="binding site" evidence="1">
    <location>
        <position position="33"/>
    </location>
    <ligand>
        <name>Zn(2+)</name>
        <dbReference type="ChEBI" id="CHEBI:29105"/>
    </ligand>
</feature>
<feature type="binding site" evidence="1">
    <location>
        <position position="37"/>
    </location>
    <ligand>
        <name>Zn(2+)</name>
        <dbReference type="ChEBI" id="CHEBI:29105"/>
    </ligand>
</feature>
<evidence type="ECO:0000255" key="1">
    <source>
        <dbReference type="HAMAP-Rule" id="MF_00649"/>
    </source>
</evidence>
<dbReference type="EMBL" id="FM178379">
    <property type="protein sequence ID" value="CAQ80319.1"/>
    <property type="molecule type" value="Genomic_DNA"/>
</dbReference>
<dbReference type="RefSeq" id="WP_012551090.1">
    <property type="nucleotide sequence ID" value="NC_011312.1"/>
</dbReference>
<dbReference type="SMR" id="B6ELG6"/>
<dbReference type="KEGG" id="vsa:VSAL_I2635"/>
<dbReference type="eggNOG" id="COG3024">
    <property type="taxonomic scope" value="Bacteria"/>
</dbReference>
<dbReference type="HOGENOM" id="CLU_178280_3_1_6"/>
<dbReference type="Proteomes" id="UP000001730">
    <property type="component" value="Chromosome 1"/>
</dbReference>
<dbReference type="GO" id="GO:0008657">
    <property type="term" value="F:DNA topoisomerase type II (double strand cut, ATP-hydrolyzing) inhibitor activity"/>
    <property type="evidence" value="ECO:0007669"/>
    <property type="project" value="UniProtKB-UniRule"/>
</dbReference>
<dbReference type="GO" id="GO:0008270">
    <property type="term" value="F:zinc ion binding"/>
    <property type="evidence" value="ECO:0007669"/>
    <property type="project" value="UniProtKB-UniRule"/>
</dbReference>
<dbReference type="GO" id="GO:0006355">
    <property type="term" value="P:regulation of DNA-templated transcription"/>
    <property type="evidence" value="ECO:0007669"/>
    <property type="project" value="InterPro"/>
</dbReference>
<dbReference type="Gene3D" id="3.30.50.10">
    <property type="entry name" value="Erythroid Transcription Factor GATA-1, subunit A"/>
    <property type="match status" value="1"/>
</dbReference>
<dbReference type="HAMAP" id="MF_00649">
    <property type="entry name" value="DNA_gyrase_inhibitor_YacG"/>
    <property type="match status" value="1"/>
</dbReference>
<dbReference type="InterPro" id="IPR005584">
    <property type="entry name" value="DNA_gyrase_inhibitor_YacG"/>
</dbReference>
<dbReference type="InterPro" id="IPR013088">
    <property type="entry name" value="Znf_NHR/GATA"/>
</dbReference>
<dbReference type="NCBIfam" id="NF001638">
    <property type="entry name" value="PRK00418.1"/>
    <property type="match status" value="1"/>
</dbReference>
<dbReference type="PANTHER" id="PTHR36150">
    <property type="entry name" value="DNA GYRASE INHIBITOR YACG"/>
    <property type="match status" value="1"/>
</dbReference>
<dbReference type="PANTHER" id="PTHR36150:SF1">
    <property type="entry name" value="DNA GYRASE INHIBITOR YACG"/>
    <property type="match status" value="1"/>
</dbReference>
<dbReference type="Pfam" id="PF03884">
    <property type="entry name" value="YacG"/>
    <property type="match status" value="1"/>
</dbReference>
<dbReference type="SUPFAM" id="SSF57716">
    <property type="entry name" value="Glucocorticoid receptor-like (DNA-binding domain)"/>
    <property type="match status" value="1"/>
</dbReference>